<accession>A4WUS9</accession>
<name>HIS2_CERS5</name>
<evidence type="ECO:0000255" key="1">
    <source>
        <dbReference type="HAMAP-Rule" id="MF_01020"/>
    </source>
</evidence>
<gene>
    <name evidence="1" type="primary">hisE</name>
    <name type="ordered locus">Rsph17025_2253</name>
</gene>
<keyword id="KW-0028">Amino-acid biosynthesis</keyword>
<keyword id="KW-0067">ATP-binding</keyword>
<keyword id="KW-0963">Cytoplasm</keyword>
<keyword id="KW-0368">Histidine biosynthesis</keyword>
<keyword id="KW-0378">Hydrolase</keyword>
<keyword id="KW-0547">Nucleotide-binding</keyword>
<feature type="chain" id="PRO_1000063380" description="Phosphoribosyl-ATP pyrophosphatase">
    <location>
        <begin position="1"/>
        <end position="103"/>
    </location>
</feature>
<organism>
    <name type="scientific">Cereibacter sphaeroides (strain ATCC 17025 / ATH 2.4.3)</name>
    <name type="common">Rhodobacter sphaeroides</name>
    <dbReference type="NCBI Taxonomy" id="349102"/>
    <lineage>
        <taxon>Bacteria</taxon>
        <taxon>Pseudomonadati</taxon>
        <taxon>Pseudomonadota</taxon>
        <taxon>Alphaproteobacteria</taxon>
        <taxon>Rhodobacterales</taxon>
        <taxon>Paracoccaceae</taxon>
        <taxon>Cereibacter</taxon>
    </lineage>
</organism>
<protein>
    <recommendedName>
        <fullName evidence="1">Phosphoribosyl-ATP pyrophosphatase</fullName>
        <shortName evidence="1">PRA-PH</shortName>
        <ecNumber evidence="1">3.6.1.31</ecNumber>
    </recommendedName>
</protein>
<proteinExistence type="inferred from homology"/>
<reference key="1">
    <citation type="submission" date="2007-04" db="EMBL/GenBank/DDBJ databases">
        <title>Complete sequence of chromosome of Rhodobacter sphaeroides ATCC 17025.</title>
        <authorList>
            <consortium name="US DOE Joint Genome Institute"/>
            <person name="Copeland A."/>
            <person name="Lucas S."/>
            <person name="Lapidus A."/>
            <person name="Barry K."/>
            <person name="Detter J.C."/>
            <person name="Glavina del Rio T."/>
            <person name="Hammon N."/>
            <person name="Israni S."/>
            <person name="Dalin E."/>
            <person name="Tice H."/>
            <person name="Pitluck S."/>
            <person name="Chertkov O."/>
            <person name="Brettin T."/>
            <person name="Bruce D."/>
            <person name="Han C."/>
            <person name="Schmutz J."/>
            <person name="Larimer F."/>
            <person name="Land M."/>
            <person name="Hauser L."/>
            <person name="Kyrpides N."/>
            <person name="Kim E."/>
            <person name="Richardson P."/>
            <person name="Mackenzie C."/>
            <person name="Choudhary M."/>
            <person name="Donohue T.J."/>
            <person name="Kaplan S."/>
        </authorList>
    </citation>
    <scope>NUCLEOTIDE SEQUENCE [LARGE SCALE GENOMIC DNA]</scope>
    <source>
        <strain>ATCC 17025 / ATH 2.4.3</strain>
    </source>
</reference>
<dbReference type="EC" id="3.6.1.31" evidence="1"/>
<dbReference type="EMBL" id="CP000661">
    <property type="protein sequence ID" value="ABP71143.1"/>
    <property type="molecule type" value="Genomic_DNA"/>
</dbReference>
<dbReference type="SMR" id="A4WUS9"/>
<dbReference type="STRING" id="349102.Rsph17025_2253"/>
<dbReference type="KEGG" id="rsq:Rsph17025_2253"/>
<dbReference type="eggNOG" id="COG0140">
    <property type="taxonomic scope" value="Bacteria"/>
</dbReference>
<dbReference type="HOGENOM" id="CLU_123337_1_1_5"/>
<dbReference type="BioCyc" id="RSPH349102:G1G8M-2323-MONOMER"/>
<dbReference type="UniPathway" id="UPA00031">
    <property type="reaction ID" value="UER00007"/>
</dbReference>
<dbReference type="GO" id="GO:0005737">
    <property type="term" value="C:cytoplasm"/>
    <property type="evidence" value="ECO:0007669"/>
    <property type="project" value="UniProtKB-SubCell"/>
</dbReference>
<dbReference type="GO" id="GO:0005524">
    <property type="term" value="F:ATP binding"/>
    <property type="evidence" value="ECO:0007669"/>
    <property type="project" value="UniProtKB-KW"/>
</dbReference>
<dbReference type="GO" id="GO:0004636">
    <property type="term" value="F:phosphoribosyl-ATP diphosphatase activity"/>
    <property type="evidence" value="ECO:0007669"/>
    <property type="project" value="UniProtKB-UniRule"/>
</dbReference>
<dbReference type="GO" id="GO:0000105">
    <property type="term" value="P:L-histidine biosynthetic process"/>
    <property type="evidence" value="ECO:0007669"/>
    <property type="project" value="UniProtKB-UniRule"/>
</dbReference>
<dbReference type="CDD" id="cd11534">
    <property type="entry name" value="NTP-PPase_HisIE_like"/>
    <property type="match status" value="1"/>
</dbReference>
<dbReference type="Gene3D" id="1.10.287.1080">
    <property type="entry name" value="MazG-like"/>
    <property type="match status" value="1"/>
</dbReference>
<dbReference type="HAMAP" id="MF_01020">
    <property type="entry name" value="HisE"/>
    <property type="match status" value="1"/>
</dbReference>
<dbReference type="InterPro" id="IPR008179">
    <property type="entry name" value="HisE"/>
</dbReference>
<dbReference type="InterPro" id="IPR021130">
    <property type="entry name" value="PRib-ATP_PPHydrolase-like"/>
</dbReference>
<dbReference type="NCBIfam" id="TIGR03188">
    <property type="entry name" value="histidine_hisI"/>
    <property type="match status" value="1"/>
</dbReference>
<dbReference type="NCBIfam" id="NF001611">
    <property type="entry name" value="PRK00400.1-3"/>
    <property type="match status" value="1"/>
</dbReference>
<dbReference type="NCBIfam" id="NF001613">
    <property type="entry name" value="PRK00400.1-5"/>
    <property type="match status" value="1"/>
</dbReference>
<dbReference type="PANTHER" id="PTHR42945">
    <property type="entry name" value="HISTIDINE BIOSYNTHESIS BIFUNCTIONAL PROTEIN"/>
    <property type="match status" value="1"/>
</dbReference>
<dbReference type="PANTHER" id="PTHR42945:SF1">
    <property type="entry name" value="HISTIDINE BIOSYNTHESIS BIFUNCTIONAL PROTEIN HIS7"/>
    <property type="match status" value="1"/>
</dbReference>
<dbReference type="Pfam" id="PF01503">
    <property type="entry name" value="PRA-PH"/>
    <property type="match status" value="1"/>
</dbReference>
<dbReference type="SUPFAM" id="SSF101386">
    <property type="entry name" value="all-alpha NTP pyrophosphatases"/>
    <property type="match status" value="1"/>
</dbReference>
<comment type="catalytic activity">
    <reaction evidence="1">
        <text>1-(5-phospho-beta-D-ribosyl)-ATP + H2O = 1-(5-phospho-beta-D-ribosyl)-5'-AMP + diphosphate + H(+)</text>
        <dbReference type="Rhea" id="RHEA:22828"/>
        <dbReference type="ChEBI" id="CHEBI:15377"/>
        <dbReference type="ChEBI" id="CHEBI:15378"/>
        <dbReference type="ChEBI" id="CHEBI:33019"/>
        <dbReference type="ChEBI" id="CHEBI:59457"/>
        <dbReference type="ChEBI" id="CHEBI:73183"/>
        <dbReference type="EC" id="3.6.1.31"/>
    </reaction>
</comment>
<comment type="pathway">
    <text evidence="1">Amino-acid biosynthesis; L-histidine biosynthesis; L-histidine from 5-phospho-alpha-D-ribose 1-diphosphate: step 2/9.</text>
</comment>
<comment type="subcellular location">
    <subcellularLocation>
        <location evidence="1">Cytoplasm</location>
    </subcellularLocation>
</comment>
<comment type="similarity">
    <text evidence="1">Belongs to the PRA-PH family.</text>
</comment>
<sequence>MSVLERLAATVEARKGADPDSSWTAKLLARGPEKCAEKFGEEAVEAIIEAVRGDRARLASEAADVLYHLLVMLAARDVTLAEVMAELERREGTSGIAEKAGRG</sequence>